<proteinExistence type="inferred from homology"/>
<protein>
    <recommendedName>
        <fullName evidence="1">LexA repressor</fullName>
        <ecNumber evidence="1">3.4.21.88</ecNumber>
    </recommendedName>
</protein>
<name>LEXA_STAAC</name>
<feature type="chain" id="PRO_0000170087" description="LexA repressor">
    <location>
        <begin position="1"/>
        <end position="207"/>
    </location>
</feature>
<feature type="DNA-binding region" description="H-T-H motif" evidence="1">
    <location>
        <begin position="28"/>
        <end position="48"/>
    </location>
</feature>
<feature type="active site" description="For autocatalytic cleavage activity" evidence="1">
    <location>
        <position position="130"/>
    </location>
</feature>
<feature type="active site" description="For autocatalytic cleavage activity" evidence="1">
    <location>
        <position position="168"/>
    </location>
</feature>
<feature type="site" description="Cleavage; by autolysis" evidence="1">
    <location>
        <begin position="93"/>
        <end position="94"/>
    </location>
</feature>
<feature type="sequence conflict" description="In Ref. 1; CAB82463." evidence="2" ref="1">
    <original>R</original>
    <variation>C</variation>
    <location>
        <position position="176"/>
    </location>
</feature>
<accession>Q9L4P1</accession>
<accession>Q5HG80</accession>
<comment type="function">
    <text evidence="1">Represses a number of genes involved in the response to DNA damage (SOS response), including recA and lexA. In the presence of single-stranded DNA, RecA interacts with LexA causing an autocatalytic cleavage which disrupts the DNA-binding part of LexA, leading to derepression of the SOS regulon and eventually DNA repair.</text>
</comment>
<comment type="catalytic activity">
    <reaction evidence="1">
        <text>Hydrolysis of Ala-|-Gly bond in repressor LexA.</text>
        <dbReference type="EC" id="3.4.21.88"/>
    </reaction>
</comment>
<comment type="subunit">
    <text evidence="1">Homodimer.</text>
</comment>
<comment type="similarity">
    <text evidence="1">Belongs to the peptidase S24 family.</text>
</comment>
<comment type="sequence caution" evidence="2">
    <conflict type="frameshift">
        <sequence resource="EMBL-CDS" id="CAB82463"/>
    </conflict>
</comment>
<dbReference type="EC" id="3.4.21.88" evidence="1"/>
<dbReference type="EMBL" id="AJ132348">
    <property type="protein sequence ID" value="CAB82463.1"/>
    <property type="status" value="ALT_FRAME"/>
    <property type="molecule type" value="Genomic_DNA"/>
</dbReference>
<dbReference type="EMBL" id="CP000046">
    <property type="protein sequence ID" value="AAW36623.1"/>
    <property type="molecule type" value="Genomic_DNA"/>
</dbReference>
<dbReference type="RefSeq" id="WP_001208760.1">
    <property type="nucleotide sequence ID" value="NZ_JBGOFO010000002.1"/>
</dbReference>
<dbReference type="SMR" id="Q9L4P1"/>
<dbReference type="MEROPS" id="S24.001"/>
<dbReference type="KEGG" id="sac:SACOL1374"/>
<dbReference type="HOGENOM" id="CLU_066192_45_1_9"/>
<dbReference type="Proteomes" id="UP000000530">
    <property type="component" value="Chromosome"/>
</dbReference>
<dbReference type="CollecTF" id="EXPREG_00001790"/>
<dbReference type="GO" id="GO:0003677">
    <property type="term" value="F:DNA binding"/>
    <property type="evidence" value="ECO:0007669"/>
    <property type="project" value="UniProtKB-UniRule"/>
</dbReference>
<dbReference type="GO" id="GO:0004252">
    <property type="term" value="F:serine-type endopeptidase activity"/>
    <property type="evidence" value="ECO:0007669"/>
    <property type="project" value="UniProtKB-UniRule"/>
</dbReference>
<dbReference type="GO" id="GO:0006281">
    <property type="term" value="P:DNA repair"/>
    <property type="evidence" value="ECO:0007669"/>
    <property type="project" value="UniProtKB-UniRule"/>
</dbReference>
<dbReference type="GO" id="GO:0006260">
    <property type="term" value="P:DNA replication"/>
    <property type="evidence" value="ECO:0007669"/>
    <property type="project" value="UniProtKB-UniRule"/>
</dbReference>
<dbReference type="GO" id="GO:0045892">
    <property type="term" value="P:negative regulation of DNA-templated transcription"/>
    <property type="evidence" value="ECO:0000269"/>
    <property type="project" value="CollecTF"/>
</dbReference>
<dbReference type="GO" id="GO:0006508">
    <property type="term" value="P:proteolysis"/>
    <property type="evidence" value="ECO:0007669"/>
    <property type="project" value="InterPro"/>
</dbReference>
<dbReference type="GO" id="GO:0009432">
    <property type="term" value="P:SOS response"/>
    <property type="evidence" value="ECO:0007669"/>
    <property type="project" value="UniProtKB-UniRule"/>
</dbReference>
<dbReference type="CDD" id="cd00090">
    <property type="entry name" value="HTH_ARSR"/>
    <property type="match status" value="1"/>
</dbReference>
<dbReference type="CDD" id="cd06529">
    <property type="entry name" value="S24_LexA-like"/>
    <property type="match status" value="1"/>
</dbReference>
<dbReference type="FunFam" id="1.10.10.10:FF:000009">
    <property type="entry name" value="LexA repressor"/>
    <property type="match status" value="1"/>
</dbReference>
<dbReference type="FunFam" id="2.10.109.10:FF:000001">
    <property type="entry name" value="LexA repressor"/>
    <property type="match status" value="1"/>
</dbReference>
<dbReference type="Gene3D" id="2.10.109.10">
    <property type="entry name" value="Umud Fragment, subunit A"/>
    <property type="match status" value="1"/>
</dbReference>
<dbReference type="Gene3D" id="1.10.10.10">
    <property type="entry name" value="Winged helix-like DNA-binding domain superfamily/Winged helix DNA-binding domain"/>
    <property type="match status" value="1"/>
</dbReference>
<dbReference type="HAMAP" id="MF_00015">
    <property type="entry name" value="LexA"/>
    <property type="match status" value="1"/>
</dbReference>
<dbReference type="InterPro" id="IPR011991">
    <property type="entry name" value="ArsR-like_HTH"/>
</dbReference>
<dbReference type="InterPro" id="IPR006200">
    <property type="entry name" value="LexA"/>
</dbReference>
<dbReference type="InterPro" id="IPR039418">
    <property type="entry name" value="LexA-like"/>
</dbReference>
<dbReference type="InterPro" id="IPR036286">
    <property type="entry name" value="LexA/Signal_pep-like_sf"/>
</dbReference>
<dbReference type="InterPro" id="IPR006199">
    <property type="entry name" value="LexA_DNA-bd_dom"/>
</dbReference>
<dbReference type="InterPro" id="IPR050077">
    <property type="entry name" value="LexA_repressor"/>
</dbReference>
<dbReference type="InterPro" id="IPR006197">
    <property type="entry name" value="Peptidase_S24_LexA"/>
</dbReference>
<dbReference type="InterPro" id="IPR015927">
    <property type="entry name" value="Peptidase_S24_S26A/B/C"/>
</dbReference>
<dbReference type="InterPro" id="IPR036388">
    <property type="entry name" value="WH-like_DNA-bd_sf"/>
</dbReference>
<dbReference type="InterPro" id="IPR036390">
    <property type="entry name" value="WH_DNA-bd_sf"/>
</dbReference>
<dbReference type="NCBIfam" id="TIGR00498">
    <property type="entry name" value="lexA"/>
    <property type="match status" value="1"/>
</dbReference>
<dbReference type="PANTHER" id="PTHR33516">
    <property type="entry name" value="LEXA REPRESSOR"/>
    <property type="match status" value="1"/>
</dbReference>
<dbReference type="PANTHER" id="PTHR33516:SF2">
    <property type="entry name" value="LEXA REPRESSOR-RELATED"/>
    <property type="match status" value="1"/>
</dbReference>
<dbReference type="Pfam" id="PF01726">
    <property type="entry name" value="LexA_DNA_bind"/>
    <property type="match status" value="1"/>
</dbReference>
<dbReference type="Pfam" id="PF00717">
    <property type="entry name" value="Peptidase_S24"/>
    <property type="match status" value="1"/>
</dbReference>
<dbReference type="PRINTS" id="PR00726">
    <property type="entry name" value="LEXASERPTASE"/>
</dbReference>
<dbReference type="SUPFAM" id="SSF51306">
    <property type="entry name" value="LexA/Signal peptidase"/>
    <property type="match status" value="1"/>
</dbReference>
<dbReference type="SUPFAM" id="SSF46785">
    <property type="entry name" value="Winged helix' DNA-binding domain"/>
    <property type="match status" value="1"/>
</dbReference>
<evidence type="ECO:0000255" key="1">
    <source>
        <dbReference type="HAMAP-Rule" id="MF_00015"/>
    </source>
</evidence>
<evidence type="ECO:0000305" key="2"/>
<reference key="1">
    <citation type="journal article" date="1999" name="Microb. Drug Resist.">
        <title>Antibiotic resistance as a stress response: complete sequencing of a large number of chromosomal loci in Staphylococcus aureus strain COL that impact on the expression of resistance to methicillin.</title>
        <authorList>
            <person name="de Lencastre H."/>
            <person name="Wu S.-W."/>
            <person name="Pinho M.G."/>
            <person name="Ludovice A.M."/>
            <person name="Filipe S."/>
            <person name="Gardete S."/>
            <person name="Sobral R."/>
            <person name="Gill S.R."/>
            <person name="Chung M."/>
            <person name="Tomasz A."/>
        </authorList>
    </citation>
    <scope>NUCLEOTIDE SEQUENCE [GENOMIC DNA]</scope>
</reference>
<reference key="2">
    <citation type="journal article" date="2005" name="J. Bacteriol.">
        <title>Insights on evolution of virulence and resistance from the complete genome analysis of an early methicillin-resistant Staphylococcus aureus strain and a biofilm-producing methicillin-resistant Staphylococcus epidermidis strain.</title>
        <authorList>
            <person name="Gill S.R."/>
            <person name="Fouts D.E."/>
            <person name="Archer G.L."/>
            <person name="Mongodin E.F."/>
            <person name="DeBoy R.T."/>
            <person name="Ravel J."/>
            <person name="Paulsen I.T."/>
            <person name="Kolonay J.F."/>
            <person name="Brinkac L.M."/>
            <person name="Beanan M.J."/>
            <person name="Dodson R.J."/>
            <person name="Daugherty S.C."/>
            <person name="Madupu R."/>
            <person name="Angiuoli S.V."/>
            <person name="Durkin A.S."/>
            <person name="Haft D.H."/>
            <person name="Vamathevan J.J."/>
            <person name="Khouri H."/>
            <person name="Utterback T.R."/>
            <person name="Lee C."/>
            <person name="Dimitrov G."/>
            <person name="Jiang L."/>
            <person name="Qin H."/>
            <person name="Weidman J."/>
            <person name="Tran K."/>
            <person name="Kang K.H."/>
            <person name="Hance I.R."/>
            <person name="Nelson K.E."/>
            <person name="Fraser C.M."/>
        </authorList>
    </citation>
    <scope>NUCLEOTIDE SEQUENCE [LARGE SCALE GENOMIC DNA]</scope>
    <source>
        <strain>COL</strain>
    </source>
</reference>
<organism>
    <name type="scientific">Staphylococcus aureus (strain COL)</name>
    <dbReference type="NCBI Taxonomy" id="93062"/>
    <lineage>
        <taxon>Bacteria</taxon>
        <taxon>Bacillati</taxon>
        <taxon>Bacillota</taxon>
        <taxon>Bacilli</taxon>
        <taxon>Bacillales</taxon>
        <taxon>Staphylococcaceae</taxon>
        <taxon>Staphylococcus</taxon>
    </lineage>
</organism>
<gene>
    <name evidence="1" type="primary">lexA</name>
    <name type="ordered locus">SACOL1374</name>
</gene>
<sequence>MRELTKRQSEIYNYIKQVVQTKGYPPSVREIGEAVGLASSSTVHGHLSRLEEKGYIRRDPTKPRAIEIVSDQTNDNINMEETIHVPVIGKVTAGVPITAVENIEEYFPLPEHLTSTHNSDIFILNVVGDSMIEAGILDGDKVIVRSQTIAENGDIIVAMTEEDEATVKRFYKEKNRYRLQPENSTMEPIYLDNVAVIGKVIGLYREM</sequence>
<keyword id="KW-0068">Autocatalytic cleavage</keyword>
<keyword id="KW-0227">DNA damage</keyword>
<keyword id="KW-0234">DNA repair</keyword>
<keyword id="KW-0235">DNA replication</keyword>
<keyword id="KW-0238">DNA-binding</keyword>
<keyword id="KW-0378">Hydrolase</keyword>
<keyword id="KW-0678">Repressor</keyword>
<keyword id="KW-0742">SOS response</keyword>
<keyword id="KW-0804">Transcription</keyword>
<keyword id="KW-0805">Transcription regulation</keyword>